<sequence length="246" mass="25884">MAIAGVLFLLFLARQASAAGYGGWQSAHATFYGGGDASGTMGGACGYGNLYSQGYGTNTAALSTALFNDGAACGSCYELRCDNAGSSCLPGSITVTATNFCPPNYGLPSDDGGWCNPPRPHFDMAEPAFLHIAQYRAGIVPVSFRRVPCVKKGGVRFTVNGHSYFNLVLVTNVAGAGDVRSVSIKGSRTGWQPMSRNWGQNWQSNAFLDGQSLSFQVTASDGRTVTSNNVAHPGWQFGQTFEGGQF</sequence>
<feature type="signal peptide" evidence="2">
    <location>
        <begin position="1"/>
        <end position="18"/>
    </location>
</feature>
<feature type="chain" id="PRO_0000251983" description="Expansin-A4">
    <location>
        <begin position="19"/>
        <end position="246"/>
    </location>
</feature>
<feature type="domain" description="Expansin-like EG45" evidence="4">
    <location>
        <begin position="42"/>
        <end position="154"/>
    </location>
</feature>
<feature type="domain" description="Expansin-like CBD" evidence="3">
    <location>
        <begin position="164"/>
        <end position="243"/>
    </location>
</feature>
<feature type="disulfide bond" evidence="4">
    <location>
        <begin position="45"/>
        <end position="73"/>
    </location>
</feature>
<feature type="disulfide bond" evidence="4">
    <location>
        <begin position="76"/>
        <end position="149"/>
    </location>
</feature>
<feature type="disulfide bond" evidence="4">
    <location>
        <begin position="81"/>
        <end position="88"/>
    </location>
</feature>
<name>EXPA4_ORYSJ</name>
<accession>Q0DHB7</accession>
<accession>B7EQ33</accession>
<accession>P93442</accession>
<accession>Q75GN4</accession>
<accession>Q946J0</accession>
<dbReference type="EMBL" id="AF394545">
    <property type="protein sequence ID" value="AAL24481.1"/>
    <property type="molecule type" value="Genomic_DNA"/>
</dbReference>
<dbReference type="EMBL" id="AC144737">
    <property type="protein sequence ID" value="AAT01362.1"/>
    <property type="molecule type" value="Genomic_DNA"/>
</dbReference>
<dbReference type="EMBL" id="AP008211">
    <property type="protein sequence ID" value="BAF17756.1"/>
    <property type="molecule type" value="Genomic_DNA"/>
</dbReference>
<dbReference type="EMBL" id="AP014961">
    <property type="protein sequence ID" value="BAS94546.1"/>
    <property type="molecule type" value="Genomic_DNA"/>
</dbReference>
<dbReference type="EMBL" id="CM000142">
    <property type="protein sequence ID" value="EAZ34678.1"/>
    <property type="molecule type" value="Genomic_DNA"/>
</dbReference>
<dbReference type="EMBL" id="CM000142">
    <property type="protein sequence ID" value="EEE64095.1"/>
    <property type="molecule type" value="Genomic_DNA"/>
</dbReference>
<dbReference type="EMBL" id="AK100179">
    <property type="protein sequence ID" value="BAG94480.1"/>
    <property type="molecule type" value="mRNA"/>
</dbReference>
<dbReference type="RefSeq" id="XP_015640854.1">
    <property type="nucleotide sequence ID" value="XM_015785368.1"/>
</dbReference>
<dbReference type="SMR" id="Q0DHB7"/>
<dbReference type="FunCoup" id="Q0DHB7">
    <property type="interactions" value="5"/>
</dbReference>
<dbReference type="STRING" id="39947.Q0DHB7"/>
<dbReference type="PaxDb" id="39947-Q0DHB7"/>
<dbReference type="EnsemblPlants" id="Os05t0477600-01">
    <property type="protein sequence ID" value="Os05t0477600-01"/>
    <property type="gene ID" value="Os05g0477600"/>
</dbReference>
<dbReference type="Gramene" id="Os05t0477600-01">
    <property type="protein sequence ID" value="Os05t0477600-01"/>
    <property type="gene ID" value="Os05g0477600"/>
</dbReference>
<dbReference type="KEGG" id="dosa:Os05g0477600"/>
<dbReference type="eggNOG" id="ENOG502QUZN">
    <property type="taxonomic scope" value="Eukaryota"/>
</dbReference>
<dbReference type="HOGENOM" id="CLU_027462_0_3_1"/>
<dbReference type="InParanoid" id="Q0DHB7"/>
<dbReference type="OMA" id="APANCDI"/>
<dbReference type="OrthoDB" id="5823761at2759"/>
<dbReference type="Proteomes" id="UP000000763">
    <property type="component" value="Chromosome 5"/>
</dbReference>
<dbReference type="Proteomes" id="UP000007752">
    <property type="component" value="Chromosome 5"/>
</dbReference>
<dbReference type="Proteomes" id="UP000059680">
    <property type="component" value="Chromosome 5"/>
</dbReference>
<dbReference type="GO" id="GO:0005576">
    <property type="term" value="C:extracellular region"/>
    <property type="evidence" value="ECO:0007669"/>
    <property type="project" value="UniProtKB-KW"/>
</dbReference>
<dbReference type="GO" id="GO:0016020">
    <property type="term" value="C:membrane"/>
    <property type="evidence" value="ECO:0007669"/>
    <property type="project" value="UniProtKB-SubCell"/>
</dbReference>
<dbReference type="GO" id="GO:0009828">
    <property type="term" value="P:plant-type cell wall loosening"/>
    <property type="evidence" value="ECO:0000314"/>
    <property type="project" value="UniProtKB"/>
</dbReference>
<dbReference type="GO" id="GO:0071669">
    <property type="term" value="P:plant-type cell wall organization or biogenesis"/>
    <property type="evidence" value="ECO:0000314"/>
    <property type="project" value="UniProtKB"/>
</dbReference>
<dbReference type="CDD" id="cd22274">
    <property type="entry name" value="DPBB_EXPA_N"/>
    <property type="match status" value="1"/>
</dbReference>
<dbReference type="FunFam" id="2.40.40.10:FF:000001">
    <property type="entry name" value="Expansin"/>
    <property type="match status" value="1"/>
</dbReference>
<dbReference type="FunFam" id="2.60.40.760:FF:000001">
    <property type="entry name" value="Expansin"/>
    <property type="match status" value="1"/>
</dbReference>
<dbReference type="Gene3D" id="2.60.40.760">
    <property type="entry name" value="Expansin, cellulose-binding-like domain"/>
    <property type="match status" value="1"/>
</dbReference>
<dbReference type="Gene3D" id="2.40.40.10">
    <property type="entry name" value="RlpA-like domain"/>
    <property type="match status" value="1"/>
</dbReference>
<dbReference type="InterPro" id="IPR007118">
    <property type="entry name" value="Expan_Lol_pI"/>
</dbReference>
<dbReference type="InterPro" id="IPR002963">
    <property type="entry name" value="Expansin"/>
</dbReference>
<dbReference type="InterPro" id="IPR007112">
    <property type="entry name" value="Expansin/allergen_DPBB_dom"/>
</dbReference>
<dbReference type="InterPro" id="IPR007117">
    <property type="entry name" value="Expansin_CBD"/>
</dbReference>
<dbReference type="InterPro" id="IPR036749">
    <property type="entry name" value="Expansin_CBD_sf"/>
</dbReference>
<dbReference type="InterPro" id="IPR009009">
    <property type="entry name" value="RlpA-like_DPBB"/>
</dbReference>
<dbReference type="InterPro" id="IPR036908">
    <property type="entry name" value="RlpA-like_sf"/>
</dbReference>
<dbReference type="PANTHER" id="PTHR31867">
    <property type="entry name" value="EXPANSIN-A15"/>
    <property type="match status" value="1"/>
</dbReference>
<dbReference type="Pfam" id="PF03330">
    <property type="entry name" value="DPBB_1"/>
    <property type="match status" value="1"/>
</dbReference>
<dbReference type="Pfam" id="PF01357">
    <property type="entry name" value="Expansin_C"/>
    <property type="match status" value="1"/>
</dbReference>
<dbReference type="PRINTS" id="PR01226">
    <property type="entry name" value="EXPANSIN"/>
</dbReference>
<dbReference type="PRINTS" id="PR01225">
    <property type="entry name" value="EXPANSNFAMLY"/>
</dbReference>
<dbReference type="SMART" id="SM00837">
    <property type="entry name" value="DPBB_1"/>
    <property type="match status" value="1"/>
</dbReference>
<dbReference type="SUPFAM" id="SSF50685">
    <property type="entry name" value="Barwin-like endoglucanases"/>
    <property type="match status" value="1"/>
</dbReference>
<dbReference type="SUPFAM" id="SSF49590">
    <property type="entry name" value="PHL pollen allergen"/>
    <property type="match status" value="1"/>
</dbReference>
<dbReference type="PROSITE" id="PS50843">
    <property type="entry name" value="EXPANSIN_CBD"/>
    <property type="match status" value="1"/>
</dbReference>
<dbReference type="PROSITE" id="PS50842">
    <property type="entry name" value="EXPANSIN_EG45"/>
    <property type="match status" value="1"/>
</dbReference>
<organism>
    <name type="scientific">Oryza sativa subsp. japonica</name>
    <name type="common">Rice</name>
    <dbReference type="NCBI Taxonomy" id="39947"/>
    <lineage>
        <taxon>Eukaryota</taxon>
        <taxon>Viridiplantae</taxon>
        <taxon>Streptophyta</taxon>
        <taxon>Embryophyta</taxon>
        <taxon>Tracheophyta</taxon>
        <taxon>Spermatophyta</taxon>
        <taxon>Magnoliopsida</taxon>
        <taxon>Liliopsida</taxon>
        <taxon>Poales</taxon>
        <taxon>Poaceae</taxon>
        <taxon>BOP clade</taxon>
        <taxon>Oryzoideae</taxon>
        <taxon>Oryzeae</taxon>
        <taxon>Oryzinae</taxon>
        <taxon>Oryza</taxon>
        <taxon>Oryza sativa</taxon>
    </lineage>
</organism>
<comment type="function">
    <text evidence="6">Causes loosening and extension of plant cell walls by disrupting non-covalent bonding between cellulose microfibrils and matrix glucans. No enzymatic activity has been found. Required for normal plant growth. May be required for rapid internodal elongation in deepwater rice during submergence.</text>
</comment>
<comment type="subcellular location">
    <subcellularLocation>
        <location evidence="1">Secreted</location>
        <location evidence="1">Cell wall</location>
    </subcellularLocation>
    <subcellularLocation>
        <location evidence="1">Membrane</location>
        <topology evidence="1">Peripheral membrane protein</topology>
    </subcellularLocation>
</comment>
<comment type="tissue specificity">
    <text evidence="5 7">Expressed in lateral root primordia, adventitious root primordia, coleoptiles, shoot apex, leaf primordia, very young leaves, panicles and flowers.</text>
</comment>
<comment type="induction">
    <text evidence="5">By gibberellin (GA3), submergence and wounding.</text>
</comment>
<comment type="disruption phenotype">
    <text evidence="6">Plants are smaller.</text>
</comment>
<comment type="similarity">
    <text evidence="8">Belongs to the expansin family. Expansin A subfamily.</text>
</comment>
<comment type="online information" name="EXPANSIN homepage">
    <link uri="https://www.dept.psu.edu/biology/groups/expansins/index.htm"/>
</comment>
<gene>
    <name type="primary">EXPA4</name>
    <name type="synonym">EXP4</name>
    <name type="ordered locus">Os05g0477600</name>
    <name type="ordered locus">LOC_Os05g39990</name>
    <name type="ORF">OsJ_018161</name>
    <name evidence="9" type="ORF">OsJ_18926</name>
    <name type="ORF">OSJNBa0018K15.5</name>
</gene>
<reference key="1">
    <citation type="journal article" date="2002" name="Plant Physiol.">
        <title>Expression of alpha-expansin and expansin-like genes in deepwater rice.</title>
        <authorList>
            <person name="Lee Y."/>
            <person name="Kende H."/>
        </authorList>
    </citation>
    <scope>NUCLEOTIDE SEQUENCE [GENOMIC DNA]</scope>
    <source>
        <strain>cv. Nipponbare</strain>
    </source>
</reference>
<reference key="2">
    <citation type="journal article" date="2005" name="Mol. Genet. Genomics">
        <title>A fine physical map of the rice chromosome 5.</title>
        <authorList>
            <person name="Cheng C.-H."/>
            <person name="Chung M.C."/>
            <person name="Liu S.-M."/>
            <person name="Chen S.-K."/>
            <person name="Kao F.Y."/>
            <person name="Lin S.-J."/>
            <person name="Hsiao S.-H."/>
            <person name="Tseng I.C."/>
            <person name="Hsing Y.-I.C."/>
            <person name="Wu H.-P."/>
            <person name="Chen C.-S."/>
            <person name="Shaw J.-F."/>
            <person name="Wu J."/>
            <person name="Matsumoto T."/>
            <person name="Sasaki T."/>
            <person name="Chen H.-C."/>
            <person name="Chow T.-Y."/>
        </authorList>
    </citation>
    <scope>NUCLEOTIDE SEQUENCE [LARGE SCALE GENOMIC DNA]</scope>
    <source>
        <strain>cv. Nipponbare</strain>
    </source>
</reference>
<reference key="3">
    <citation type="journal article" date="2005" name="Nature">
        <title>The map-based sequence of the rice genome.</title>
        <authorList>
            <consortium name="International rice genome sequencing project (IRGSP)"/>
        </authorList>
    </citation>
    <scope>NUCLEOTIDE SEQUENCE [LARGE SCALE GENOMIC DNA]</scope>
    <source>
        <strain>cv. Nipponbare</strain>
    </source>
</reference>
<reference key="4">
    <citation type="journal article" date="2008" name="Nucleic Acids Res.">
        <title>The rice annotation project database (RAP-DB): 2008 update.</title>
        <authorList>
            <consortium name="The rice annotation project (RAP)"/>
        </authorList>
    </citation>
    <scope>GENOME REANNOTATION</scope>
    <source>
        <strain>cv. Nipponbare</strain>
    </source>
</reference>
<reference key="5">
    <citation type="journal article" date="2013" name="Rice">
        <title>Improvement of the Oryza sativa Nipponbare reference genome using next generation sequence and optical map data.</title>
        <authorList>
            <person name="Kawahara Y."/>
            <person name="de la Bastide M."/>
            <person name="Hamilton J.P."/>
            <person name="Kanamori H."/>
            <person name="McCombie W.R."/>
            <person name="Ouyang S."/>
            <person name="Schwartz D.C."/>
            <person name="Tanaka T."/>
            <person name="Wu J."/>
            <person name="Zhou S."/>
            <person name="Childs K.L."/>
            <person name="Davidson R.M."/>
            <person name="Lin H."/>
            <person name="Quesada-Ocampo L."/>
            <person name="Vaillancourt B."/>
            <person name="Sakai H."/>
            <person name="Lee S.S."/>
            <person name="Kim J."/>
            <person name="Numa H."/>
            <person name="Itoh T."/>
            <person name="Buell C.R."/>
            <person name="Matsumoto T."/>
        </authorList>
    </citation>
    <scope>GENOME REANNOTATION</scope>
    <source>
        <strain>cv. Nipponbare</strain>
    </source>
</reference>
<reference key="6">
    <citation type="journal article" date="2005" name="PLoS Biol.">
        <title>The genomes of Oryza sativa: a history of duplications.</title>
        <authorList>
            <person name="Yu J."/>
            <person name="Wang J."/>
            <person name="Lin W."/>
            <person name="Li S."/>
            <person name="Li H."/>
            <person name="Zhou J."/>
            <person name="Ni P."/>
            <person name="Dong W."/>
            <person name="Hu S."/>
            <person name="Zeng C."/>
            <person name="Zhang J."/>
            <person name="Zhang Y."/>
            <person name="Li R."/>
            <person name="Xu Z."/>
            <person name="Li S."/>
            <person name="Li X."/>
            <person name="Zheng H."/>
            <person name="Cong L."/>
            <person name="Lin L."/>
            <person name="Yin J."/>
            <person name="Geng J."/>
            <person name="Li G."/>
            <person name="Shi J."/>
            <person name="Liu J."/>
            <person name="Lv H."/>
            <person name="Li J."/>
            <person name="Wang J."/>
            <person name="Deng Y."/>
            <person name="Ran L."/>
            <person name="Shi X."/>
            <person name="Wang X."/>
            <person name="Wu Q."/>
            <person name="Li C."/>
            <person name="Ren X."/>
            <person name="Wang J."/>
            <person name="Wang X."/>
            <person name="Li D."/>
            <person name="Liu D."/>
            <person name="Zhang X."/>
            <person name="Ji Z."/>
            <person name="Zhao W."/>
            <person name="Sun Y."/>
            <person name="Zhang Z."/>
            <person name="Bao J."/>
            <person name="Han Y."/>
            <person name="Dong L."/>
            <person name="Ji J."/>
            <person name="Chen P."/>
            <person name="Wu S."/>
            <person name="Liu J."/>
            <person name="Xiao Y."/>
            <person name="Bu D."/>
            <person name="Tan J."/>
            <person name="Yang L."/>
            <person name="Ye C."/>
            <person name="Zhang J."/>
            <person name="Xu J."/>
            <person name="Zhou Y."/>
            <person name="Yu Y."/>
            <person name="Zhang B."/>
            <person name="Zhuang S."/>
            <person name="Wei H."/>
            <person name="Liu B."/>
            <person name="Lei M."/>
            <person name="Yu H."/>
            <person name="Li Y."/>
            <person name="Xu H."/>
            <person name="Wei S."/>
            <person name="He X."/>
            <person name="Fang L."/>
            <person name="Zhang Z."/>
            <person name="Zhang Y."/>
            <person name="Huang X."/>
            <person name="Su Z."/>
            <person name="Tong W."/>
            <person name="Li J."/>
            <person name="Tong Z."/>
            <person name="Li S."/>
            <person name="Ye J."/>
            <person name="Wang L."/>
            <person name="Fang L."/>
            <person name="Lei T."/>
            <person name="Chen C.-S."/>
            <person name="Chen H.-C."/>
            <person name="Xu Z."/>
            <person name="Li H."/>
            <person name="Huang H."/>
            <person name="Zhang F."/>
            <person name="Xu H."/>
            <person name="Li N."/>
            <person name="Zhao C."/>
            <person name="Li S."/>
            <person name="Dong L."/>
            <person name="Huang Y."/>
            <person name="Li L."/>
            <person name="Xi Y."/>
            <person name="Qi Q."/>
            <person name="Li W."/>
            <person name="Zhang B."/>
            <person name="Hu W."/>
            <person name="Zhang Y."/>
            <person name="Tian X."/>
            <person name="Jiao Y."/>
            <person name="Liang X."/>
            <person name="Jin J."/>
            <person name="Gao L."/>
            <person name="Zheng W."/>
            <person name="Hao B."/>
            <person name="Liu S.-M."/>
            <person name="Wang W."/>
            <person name="Yuan L."/>
            <person name="Cao M."/>
            <person name="McDermott J."/>
            <person name="Samudrala R."/>
            <person name="Wang J."/>
            <person name="Wong G.K.-S."/>
            <person name="Yang H."/>
        </authorList>
    </citation>
    <scope>NUCLEOTIDE SEQUENCE [LARGE SCALE GENOMIC DNA]</scope>
    <source>
        <strain>cv. Nipponbare</strain>
    </source>
</reference>
<reference key="7">
    <citation type="journal article" date="2003" name="Science">
        <title>Collection, mapping, and annotation of over 28,000 cDNA clones from japonica rice.</title>
        <authorList>
            <consortium name="The rice full-length cDNA consortium"/>
        </authorList>
    </citation>
    <scope>NUCLEOTIDE SEQUENCE [LARGE SCALE MRNA]</scope>
    <source>
        <strain>cv. Nipponbare</strain>
    </source>
</reference>
<reference key="8">
    <citation type="journal article" date="2000" name="Planta">
        <title>Expression of alpha-expansin genes in young seedlings of rice (Oryza sativa L.).</title>
        <authorList>
            <person name="Huang J."/>
            <person name="Takano T."/>
            <person name="Akita S."/>
        </authorList>
    </citation>
    <scope>TISSUE SPECIFICITY</scope>
    <scope>INDUCTION</scope>
</reference>
<reference key="9">
    <citation type="journal article" date="2003" name="Plant Cell">
        <title>Regulation of expansin gene expression affects growth and development in transgenic rice plants.</title>
        <authorList>
            <person name="Choi D."/>
            <person name="Lee Y."/>
            <person name="Cho H.-T."/>
            <person name="Kende H."/>
        </authorList>
    </citation>
    <scope>FUNCTION</scope>
    <scope>DISRUPTION PHENOTYPE</scope>
</reference>
<reference key="10">
    <citation type="journal article" date="2004" name="Plant Mol. Biol.">
        <title>Nomenclature for members of the expansin superfamily of genes and proteins.</title>
        <authorList>
            <person name="Kende H."/>
            <person name="Bradford K.J."/>
            <person name="Brummell D.A."/>
            <person name="Cho H.-T."/>
            <person name="Cosgrove D.J."/>
            <person name="Fleming A.J."/>
            <person name="Gehring C."/>
            <person name="Lee Y."/>
            <person name="McQueen-Mason S.J."/>
            <person name="Rose J.K.C."/>
            <person name="Voesenek L.A.C."/>
        </authorList>
    </citation>
    <scope>NOMENCLATURE</scope>
</reference>
<reference key="11">
    <citation type="journal article" date="2005" name="Mol. Cells">
        <title>Characterization and transcriptional expression of the alpha-expansin gene family in rice.</title>
        <authorList>
            <person name="Shin J.-H."/>
            <person name="Jeong D.-H."/>
            <person name="Park M.C."/>
            <person name="An G."/>
        </authorList>
    </citation>
    <scope>TISSUE SPECIFICITY</scope>
</reference>
<keyword id="KW-0134">Cell wall</keyword>
<keyword id="KW-1015">Disulfide bond</keyword>
<keyword id="KW-0472">Membrane</keyword>
<keyword id="KW-1185">Reference proteome</keyword>
<keyword id="KW-0964">Secreted</keyword>
<keyword id="KW-0732">Signal</keyword>
<proteinExistence type="evidence at transcript level"/>
<evidence type="ECO:0000250" key="1"/>
<evidence type="ECO:0000255" key="2"/>
<evidence type="ECO:0000255" key="3">
    <source>
        <dbReference type="PROSITE-ProRule" id="PRU00078"/>
    </source>
</evidence>
<evidence type="ECO:0000255" key="4">
    <source>
        <dbReference type="PROSITE-ProRule" id="PRU00079"/>
    </source>
</evidence>
<evidence type="ECO:0000269" key="5">
    <source>
    </source>
</evidence>
<evidence type="ECO:0000269" key="6">
    <source>
    </source>
</evidence>
<evidence type="ECO:0000269" key="7">
    <source>
    </source>
</evidence>
<evidence type="ECO:0000305" key="8"/>
<evidence type="ECO:0000312" key="9">
    <source>
        <dbReference type="EMBL" id="EEE64095.1"/>
    </source>
</evidence>
<protein>
    <recommendedName>
        <fullName>Expansin-A4</fullName>
    </recommendedName>
    <alternativeName>
        <fullName>Alpha-expansin-4</fullName>
    </alternativeName>
    <alternativeName>
        <fullName>OsEXP4</fullName>
    </alternativeName>
    <alternativeName>
        <fullName>OsEXPA4</fullName>
    </alternativeName>
    <alternativeName>
        <fullName>OsaEXPa1.22</fullName>
    </alternativeName>
</protein>